<gene>
    <name evidence="1" type="primary">rplB</name>
    <name type="ordered locus">FMG_0158</name>
</gene>
<keyword id="KW-1185">Reference proteome</keyword>
<keyword id="KW-0687">Ribonucleoprotein</keyword>
<keyword id="KW-0689">Ribosomal protein</keyword>
<keyword id="KW-0694">RNA-binding</keyword>
<keyword id="KW-0699">rRNA-binding</keyword>
<feature type="chain" id="PRO_0000342532" description="Large ribosomal subunit protein uL2">
    <location>
        <begin position="1"/>
        <end position="276"/>
    </location>
</feature>
<feature type="region of interest" description="Disordered" evidence="2">
    <location>
        <begin position="218"/>
        <end position="276"/>
    </location>
</feature>
<feature type="compositionally biased region" description="Basic residues" evidence="2">
    <location>
        <begin position="258"/>
        <end position="276"/>
    </location>
</feature>
<dbReference type="EMBL" id="AP008971">
    <property type="protein sequence ID" value="BAG07576.1"/>
    <property type="molecule type" value="Genomic_DNA"/>
</dbReference>
<dbReference type="RefSeq" id="WP_002837367.1">
    <property type="nucleotide sequence ID" value="NC_010376.1"/>
</dbReference>
<dbReference type="SMR" id="B0RZU3"/>
<dbReference type="STRING" id="334413.FMG_0158"/>
<dbReference type="KEGG" id="fma:FMG_0158"/>
<dbReference type="eggNOG" id="COG0090">
    <property type="taxonomic scope" value="Bacteria"/>
</dbReference>
<dbReference type="HOGENOM" id="CLU_036235_2_1_9"/>
<dbReference type="Proteomes" id="UP000001319">
    <property type="component" value="Chromosome"/>
</dbReference>
<dbReference type="GO" id="GO:0015934">
    <property type="term" value="C:large ribosomal subunit"/>
    <property type="evidence" value="ECO:0007669"/>
    <property type="project" value="InterPro"/>
</dbReference>
<dbReference type="GO" id="GO:0019843">
    <property type="term" value="F:rRNA binding"/>
    <property type="evidence" value="ECO:0007669"/>
    <property type="project" value="UniProtKB-UniRule"/>
</dbReference>
<dbReference type="GO" id="GO:0003735">
    <property type="term" value="F:structural constituent of ribosome"/>
    <property type="evidence" value="ECO:0007669"/>
    <property type="project" value="InterPro"/>
</dbReference>
<dbReference type="GO" id="GO:0016740">
    <property type="term" value="F:transferase activity"/>
    <property type="evidence" value="ECO:0007669"/>
    <property type="project" value="InterPro"/>
</dbReference>
<dbReference type="GO" id="GO:0002181">
    <property type="term" value="P:cytoplasmic translation"/>
    <property type="evidence" value="ECO:0007669"/>
    <property type="project" value="TreeGrafter"/>
</dbReference>
<dbReference type="FunFam" id="2.30.30.30:FF:000001">
    <property type="entry name" value="50S ribosomal protein L2"/>
    <property type="match status" value="1"/>
</dbReference>
<dbReference type="FunFam" id="2.40.50.140:FF:000003">
    <property type="entry name" value="50S ribosomal protein L2"/>
    <property type="match status" value="1"/>
</dbReference>
<dbReference type="FunFam" id="4.10.950.10:FF:000001">
    <property type="entry name" value="50S ribosomal protein L2"/>
    <property type="match status" value="1"/>
</dbReference>
<dbReference type="Gene3D" id="2.30.30.30">
    <property type="match status" value="1"/>
</dbReference>
<dbReference type="Gene3D" id="2.40.50.140">
    <property type="entry name" value="Nucleic acid-binding proteins"/>
    <property type="match status" value="1"/>
</dbReference>
<dbReference type="Gene3D" id="4.10.950.10">
    <property type="entry name" value="Ribosomal protein L2, domain 3"/>
    <property type="match status" value="1"/>
</dbReference>
<dbReference type="HAMAP" id="MF_01320_B">
    <property type="entry name" value="Ribosomal_uL2_B"/>
    <property type="match status" value="1"/>
</dbReference>
<dbReference type="InterPro" id="IPR012340">
    <property type="entry name" value="NA-bd_OB-fold"/>
</dbReference>
<dbReference type="InterPro" id="IPR014722">
    <property type="entry name" value="Rib_uL2_dom2"/>
</dbReference>
<dbReference type="InterPro" id="IPR002171">
    <property type="entry name" value="Ribosomal_uL2"/>
</dbReference>
<dbReference type="InterPro" id="IPR005880">
    <property type="entry name" value="Ribosomal_uL2_bac/org-type"/>
</dbReference>
<dbReference type="InterPro" id="IPR022669">
    <property type="entry name" value="Ribosomal_uL2_C"/>
</dbReference>
<dbReference type="InterPro" id="IPR022671">
    <property type="entry name" value="Ribosomal_uL2_CS"/>
</dbReference>
<dbReference type="InterPro" id="IPR014726">
    <property type="entry name" value="Ribosomal_uL2_dom3"/>
</dbReference>
<dbReference type="InterPro" id="IPR022666">
    <property type="entry name" value="Ribosomal_uL2_RNA-bd_dom"/>
</dbReference>
<dbReference type="InterPro" id="IPR008991">
    <property type="entry name" value="Translation_prot_SH3-like_sf"/>
</dbReference>
<dbReference type="NCBIfam" id="TIGR01171">
    <property type="entry name" value="rplB_bact"/>
    <property type="match status" value="1"/>
</dbReference>
<dbReference type="PANTHER" id="PTHR13691:SF5">
    <property type="entry name" value="LARGE RIBOSOMAL SUBUNIT PROTEIN UL2M"/>
    <property type="match status" value="1"/>
</dbReference>
<dbReference type="PANTHER" id="PTHR13691">
    <property type="entry name" value="RIBOSOMAL PROTEIN L2"/>
    <property type="match status" value="1"/>
</dbReference>
<dbReference type="Pfam" id="PF00181">
    <property type="entry name" value="Ribosomal_L2"/>
    <property type="match status" value="1"/>
</dbReference>
<dbReference type="Pfam" id="PF03947">
    <property type="entry name" value="Ribosomal_L2_C"/>
    <property type="match status" value="1"/>
</dbReference>
<dbReference type="PIRSF" id="PIRSF002158">
    <property type="entry name" value="Ribosomal_L2"/>
    <property type="match status" value="1"/>
</dbReference>
<dbReference type="SMART" id="SM01383">
    <property type="entry name" value="Ribosomal_L2"/>
    <property type="match status" value="1"/>
</dbReference>
<dbReference type="SMART" id="SM01382">
    <property type="entry name" value="Ribosomal_L2_C"/>
    <property type="match status" value="1"/>
</dbReference>
<dbReference type="SUPFAM" id="SSF50249">
    <property type="entry name" value="Nucleic acid-binding proteins"/>
    <property type="match status" value="1"/>
</dbReference>
<dbReference type="SUPFAM" id="SSF50104">
    <property type="entry name" value="Translation proteins SH3-like domain"/>
    <property type="match status" value="1"/>
</dbReference>
<dbReference type="PROSITE" id="PS00467">
    <property type="entry name" value="RIBOSOMAL_L2"/>
    <property type="match status" value="1"/>
</dbReference>
<sequence>MAIKKYKPTSAGVRGMSVLSFDEITKTTPEKSLTVSLNKSGGRNSYGRVTIRHRGGGAKRKYRIIDFKRNKDGIKAVVKSIEYDPNRTANIALLQYEDGEKRYIIQPVGLKVGDVVESGADVDIVPGNALPLRNIPVGTTVHNIEMKVGKGAQLVRTAGAEAQLMAKEGKFAQLRLPSGEFRLIHLDCKATVGQVGNISHELVTIGKAGRNRHLGKRPYVRGSAMNPVDHPHGGGEGRAPIGRPAPSTPWGKPALGLKTRKKNKKSNKYIVRRRKK</sequence>
<name>RL2_FINM2</name>
<organism>
    <name type="scientific">Finegoldia magna (strain ATCC 29328 / DSM 20472 / WAL 2508)</name>
    <name type="common">Peptostreptococcus magnus</name>
    <dbReference type="NCBI Taxonomy" id="334413"/>
    <lineage>
        <taxon>Bacteria</taxon>
        <taxon>Bacillati</taxon>
        <taxon>Bacillota</taxon>
        <taxon>Tissierellia</taxon>
        <taxon>Tissierellales</taxon>
        <taxon>Peptoniphilaceae</taxon>
        <taxon>Finegoldia</taxon>
    </lineage>
</organism>
<protein>
    <recommendedName>
        <fullName evidence="1">Large ribosomal subunit protein uL2</fullName>
    </recommendedName>
    <alternativeName>
        <fullName evidence="3">50S ribosomal protein L2</fullName>
    </alternativeName>
</protein>
<proteinExistence type="inferred from homology"/>
<comment type="function">
    <text evidence="1">One of the primary rRNA binding proteins. Required for association of the 30S and 50S subunits to form the 70S ribosome, for tRNA binding and peptide bond formation. It has been suggested to have peptidyltransferase activity; this is somewhat controversial. Makes several contacts with the 16S rRNA in the 70S ribosome.</text>
</comment>
<comment type="subunit">
    <text evidence="1">Part of the 50S ribosomal subunit. Forms a bridge to the 30S subunit in the 70S ribosome.</text>
</comment>
<comment type="similarity">
    <text evidence="1">Belongs to the universal ribosomal protein uL2 family.</text>
</comment>
<evidence type="ECO:0000255" key="1">
    <source>
        <dbReference type="HAMAP-Rule" id="MF_01320"/>
    </source>
</evidence>
<evidence type="ECO:0000256" key="2">
    <source>
        <dbReference type="SAM" id="MobiDB-lite"/>
    </source>
</evidence>
<evidence type="ECO:0000305" key="3"/>
<accession>B0RZU3</accession>
<reference key="1">
    <citation type="journal article" date="2008" name="DNA Res.">
        <title>Complete genome sequence of Finegoldia magna, an anaerobic opportunistic pathogen.</title>
        <authorList>
            <person name="Goto T."/>
            <person name="Yamashita A."/>
            <person name="Hirakawa H."/>
            <person name="Matsutani M."/>
            <person name="Todo K."/>
            <person name="Ohshima K."/>
            <person name="Toh H."/>
            <person name="Miyamoto K."/>
            <person name="Kuhara S."/>
            <person name="Hattori M."/>
            <person name="Shimizu T."/>
            <person name="Akimoto S."/>
        </authorList>
    </citation>
    <scope>NUCLEOTIDE SEQUENCE [LARGE SCALE GENOMIC DNA]</scope>
    <source>
        <strain>ATCC 29328 / DSM 20472 / WAL 2508</strain>
    </source>
</reference>